<comment type="function">
    <text evidence="1">Catalyzes the reversible conversion of 2-phosphoglycerate (2-PG) into phosphoenolpyruvate (PEP). It is essential for the degradation of carbohydrates via glycolysis.</text>
</comment>
<comment type="catalytic activity">
    <reaction evidence="1">
        <text>(2R)-2-phosphoglycerate = phosphoenolpyruvate + H2O</text>
        <dbReference type="Rhea" id="RHEA:10164"/>
        <dbReference type="ChEBI" id="CHEBI:15377"/>
        <dbReference type="ChEBI" id="CHEBI:58289"/>
        <dbReference type="ChEBI" id="CHEBI:58702"/>
        <dbReference type="EC" id="4.2.1.11"/>
    </reaction>
</comment>
<comment type="cofactor">
    <cofactor evidence="1">
        <name>Mg(2+)</name>
        <dbReference type="ChEBI" id="CHEBI:18420"/>
    </cofactor>
    <text evidence="1">Binds a second Mg(2+) ion via substrate during catalysis.</text>
</comment>
<comment type="pathway">
    <text evidence="1">Carbohydrate degradation; glycolysis; pyruvate from D-glyceraldehyde 3-phosphate: step 4/5.</text>
</comment>
<comment type="subcellular location">
    <subcellularLocation>
        <location evidence="1">Cytoplasm</location>
    </subcellularLocation>
    <subcellularLocation>
        <location evidence="1">Secreted</location>
    </subcellularLocation>
    <subcellularLocation>
        <location evidence="1">Cell surface</location>
    </subcellularLocation>
    <text evidence="1">Fractions of enolase are present in both the cytoplasm and on the cell surface.</text>
</comment>
<comment type="similarity">
    <text evidence="1">Belongs to the enolase family.</text>
</comment>
<protein>
    <recommendedName>
        <fullName evidence="1">Enolase</fullName>
        <ecNumber evidence="1">4.2.1.11</ecNumber>
    </recommendedName>
    <alternativeName>
        <fullName evidence="1">2-phospho-D-glycerate hydro-lyase</fullName>
    </alternativeName>
    <alternativeName>
        <fullName evidence="1">2-phosphoglycerate dehydratase</fullName>
    </alternativeName>
</protein>
<organism>
    <name type="scientific">Helicobacter hepaticus (strain ATCC 51449 / 3B1)</name>
    <dbReference type="NCBI Taxonomy" id="235279"/>
    <lineage>
        <taxon>Bacteria</taxon>
        <taxon>Pseudomonadati</taxon>
        <taxon>Campylobacterota</taxon>
        <taxon>Epsilonproteobacteria</taxon>
        <taxon>Campylobacterales</taxon>
        <taxon>Helicobacteraceae</taxon>
        <taxon>Helicobacter</taxon>
    </lineage>
</organism>
<reference key="1">
    <citation type="journal article" date="2003" name="Proc. Natl. Acad. Sci. U.S.A.">
        <title>The complete genome sequence of the carcinogenic bacterium Helicobacter hepaticus.</title>
        <authorList>
            <person name="Suerbaum S."/>
            <person name="Josenhans C."/>
            <person name="Sterzenbach T."/>
            <person name="Drescher B."/>
            <person name="Brandt P."/>
            <person name="Bell M."/>
            <person name="Droege M."/>
            <person name="Fartmann B."/>
            <person name="Fischer H.-P."/>
            <person name="Ge Z."/>
            <person name="Hoerster A."/>
            <person name="Holland R."/>
            <person name="Klein K."/>
            <person name="Koenig J."/>
            <person name="Macko L."/>
            <person name="Mendz G.L."/>
            <person name="Nyakatura G."/>
            <person name="Schauer D.B."/>
            <person name="Shen Z."/>
            <person name="Weber J."/>
            <person name="Frosch M."/>
            <person name="Fox J.G."/>
        </authorList>
    </citation>
    <scope>NUCLEOTIDE SEQUENCE [LARGE SCALE GENOMIC DNA]</scope>
    <source>
        <strain>ATCC 51449 / 3B1</strain>
    </source>
</reference>
<gene>
    <name evidence="1" type="primary">eno</name>
    <name type="ordered locus">HH_0631</name>
</gene>
<sequence length="425" mass="46322">MVYIEAIDAQEVMDSRGNPTVRAAVRLSDGTRAAAIVPSGASTGKREALELRDGDKERYLGKGVLKACANIKTEIAAQLDGVSPYDQSKIDLILKKIDGTENYSELGANATLGVSMAIARASAQSLRLPLYRYLGGSNALTLPTPMLNIINGGSHADNTVDFQEYMIMPLGFDTFAESLRASAEIYHHLKAILKGSGHITSIGDEGGFAPNLKNNEEPIEIILKAIEQAGYKPLDEIAIALDVASSELVDENGMYHLAGEGKVLDSAGMIAYYENLVAKYPIVSIEDGLSEDDWEGWKLLTQKLGNKIQLVGDDLFVTNKKILQEGIEKNIANAILIKPNQIGSVSETMQSVRLAQRNNYKCIMSHRSGESEDTFIADFAVALNTGEIKTGSTARSERIAKYNRLLEIEREISDAEYIGKTLFKR</sequence>
<name>ENO_HELHP</name>
<feature type="chain" id="PRO_0000133896" description="Enolase">
    <location>
        <begin position="1"/>
        <end position="425"/>
    </location>
</feature>
<feature type="active site" description="Proton donor" evidence="1">
    <location>
        <position position="205"/>
    </location>
</feature>
<feature type="active site" description="Proton acceptor" evidence="1">
    <location>
        <position position="338"/>
    </location>
</feature>
<feature type="binding site" evidence="1">
    <location>
        <position position="163"/>
    </location>
    <ligand>
        <name>(2R)-2-phosphoglycerate</name>
        <dbReference type="ChEBI" id="CHEBI:58289"/>
    </ligand>
</feature>
<feature type="binding site" evidence="1">
    <location>
        <position position="242"/>
    </location>
    <ligand>
        <name>Mg(2+)</name>
        <dbReference type="ChEBI" id="CHEBI:18420"/>
    </ligand>
</feature>
<feature type="binding site" evidence="1">
    <location>
        <position position="286"/>
    </location>
    <ligand>
        <name>Mg(2+)</name>
        <dbReference type="ChEBI" id="CHEBI:18420"/>
    </ligand>
</feature>
<feature type="binding site" evidence="1">
    <location>
        <position position="313"/>
    </location>
    <ligand>
        <name>Mg(2+)</name>
        <dbReference type="ChEBI" id="CHEBI:18420"/>
    </ligand>
</feature>
<feature type="binding site" evidence="1">
    <location>
        <position position="338"/>
    </location>
    <ligand>
        <name>(2R)-2-phosphoglycerate</name>
        <dbReference type="ChEBI" id="CHEBI:58289"/>
    </ligand>
</feature>
<feature type="binding site" evidence="1">
    <location>
        <position position="367"/>
    </location>
    <ligand>
        <name>(2R)-2-phosphoglycerate</name>
        <dbReference type="ChEBI" id="CHEBI:58289"/>
    </ligand>
</feature>
<feature type="binding site" evidence="1">
    <location>
        <position position="368"/>
    </location>
    <ligand>
        <name>(2R)-2-phosphoglycerate</name>
        <dbReference type="ChEBI" id="CHEBI:58289"/>
    </ligand>
</feature>
<feature type="binding site" evidence="1">
    <location>
        <position position="389"/>
    </location>
    <ligand>
        <name>(2R)-2-phosphoglycerate</name>
        <dbReference type="ChEBI" id="CHEBI:58289"/>
    </ligand>
</feature>
<accession>Q7VIH4</accession>
<evidence type="ECO:0000255" key="1">
    <source>
        <dbReference type="HAMAP-Rule" id="MF_00318"/>
    </source>
</evidence>
<keyword id="KW-0963">Cytoplasm</keyword>
<keyword id="KW-0324">Glycolysis</keyword>
<keyword id="KW-0456">Lyase</keyword>
<keyword id="KW-0460">Magnesium</keyword>
<keyword id="KW-0479">Metal-binding</keyword>
<keyword id="KW-1185">Reference proteome</keyword>
<keyword id="KW-0964">Secreted</keyword>
<proteinExistence type="inferred from homology"/>
<dbReference type="EC" id="4.2.1.11" evidence="1"/>
<dbReference type="EMBL" id="AE017125">
    <property type="protein sequence ID" value="AAP77228.1"/>
    <property type="molecule type" value="Genomic_DNA"/>
</dbReference>
<dbReference type="RefSeq" id="WP_011115473.1">
    <property type="nucleotide sequence ID" value="NC_004917.1"/>
</dbReference>
<dbReference type="SMR" id="Q7VIH4"/>
<dbReference type="STRING" id="235279.HH_0631"/>
<dbReference type="KEGG" id="hhe:HH_0631"/>
<dbReference type="eggNOG" id="COG0148">
    <property type="taxonomic scope" value="Bacteria"/>
</dbReference>
<dbReference type="HOGENOM" id="CLU_031223_2_1_7"/>
<dbReference type="OrthoDB" id="9804716at2"/>
<dbReference type="UniPathway" id="UPA00109">
    <property type="reaction ID" value="UER00187"/>
</dbReference>
<dbReference type="Proteomes" id="UP000002495">
    <property type="component" value="Chromosome"/>
</dbReference>
<dbReference type="GO" id="GO:0009986">
    <property type="term" value="C:cell surface"/>
    <property type="evidence" value="ECO:0007669"/>
    <property type="project" value="UniProtKB-SubCell"/>
</dbReference>
<dbReference type="GO" id="GO:0005576">
    <property type="term" value="C:extracellular region"/>
    <property type="evidence" value="ECO:0007669"/>
    <property type="project" value="UniProtKB-SubCell"/>
</dbReference>
<dbReference type="GO" id="GO:0000015">
    <property type="term" value="C:phosphopyruvate hydratase complex"/>
    <property type="evidence" value="ECO:0007669"/>
    <property type="project" value="InterPro"/>
</dbReference>
<dbReference type="GO" id="GO:0000287">
    <property type="term" value="F:magnesium ion binding"/>
    <property type="evidence" value="ECO:0007669"/>
    <property type="project" value="UniProtKB-UniRule"/>
</dbReference>
<dbReference type="GO" id="GO:0004634">
    <property type="term" value="F:phosphopyruvate hydratase activity"/>
    <property type="evidence" value="ECO:0007669"/>
    <property type="project" value="UniProtKB-UniRule"/>
</dbReference>
<dbReference type="GO" id="GO:0006096">
    <property type="term" value="P:glycolytic process"/>
    <property type="evidence" value="ECO:0007669"/>
    <property type="project" value="UniProtKB-UniRule"/>
</dbReference>
<dbReference type="CDD" id="cd03313">
    <property type="entry name" value="enolase"/>
    <property type="match status" value="1"/>
</dbReference>
<dbReference type="Gene3D" id="3.20.20.120">
    <property type="entry name" value="Enolase-like C-terminal domain"/>
    <property type="match status" value="1"/>
</dbReference>
<dbReference type="Gene3D" id="3.30.390.10">
    <property type="entry name" value="Enolase-like, N-terminal domain"/>
    <property type="match status" value="1"/>
</dbReference>
<dbReference type="HAMAP" id="MF_00318">
    <property type="entry name" value="Enolase"/>
    <property type="match status" value="1"/>
</dbReference>
<dbReference type="InterPro" id="IPR000941">
    <property type="entry name" value="Enolase"/>
</dbReference>
<dbReference type="InterPro" id="IPR036849">
    <property type="entry name" value="Enolase-like_C_sf"/>
</dbReference>
<dbReference type="InterPro" id="IPR029017">
    <property type="entry name" value="Enolase-like_N"/>
</dbReference>
<dbReference type="InterPro" id="IPR020810">
    <property type="entry name" value="Enolase_C"/>
</dbReference>
<dbReference type="InterPro" id="IPR020809">
    <property type="entry name" value="Enolase_CS"/>
</dbReference>
<dbReference type="InterPro" id="IPR020811">
    <property type="entry name" value="Enolase_N"/>
</dbReference>
<dbReference type="NCBIfam" id="TIGR01060">
    <property type="entry name" value="eno"/>
    <property type="match status" value="1"/>
</dbReference>
<dbReference type="PANTHER" id="PTHR11902">
    <property type="entry name" value="ENOLASE"/>
    <property type="match status" value="1"/>
</dbReference>
<dbReference type="PANTHER" id="PTHR11902:SF1">
    <property type="entry name" value="ENOLASE"/>
    <property type="match status" value="1"/>
</dbReference>
<dbReference type="Pfam" id="PF00113">
    <property type="entry name" value="Enolase_C"/>
    <property type="match status" value="1"/>
</dbReference>
<dbReference type="Pfam" id="PF03952">
    <property type="entry name" value="Enolase_N"/>
    <property type="match status" value="1"/>
</dbReference>
<dbReference type="PIRSF" id="PIRSF001400">
    <property type="entry name" value="Enolase"/>
    <property type="match status" value="1"/>
</dbReference>
<dbReference type="PRINTS" id="PR00148">
    <property type="entry name" value="ENOLASE"/>
</dbReference>
<dbReference type="SFLD" id="SFLDS00001">
    <property type="entry name" value="Enolase"/>
    <property type="match status" value="1"/>
</dbReference>
<dbReference type="SFLD" id="SFLDF00002">
    <property type="entry name" value="enolase"/>
    <property type="match status" value="1"/>
</dbReference>
<dbReference type="SMART" id="SM01192">
    <property type="entry name" value="Enolase_C"/>
    <property type="match status" value="1"/>
</dbReference>
<dbReference type="SMART" id="SM01193">
    <property type="entry name" value="Enolase_N"/>
    <property type="match status" value="1"/>
</dbReference>
<dbReference type="SUPFAM" id="SSF51604">
    <property type="entry name" value="Enolase C-terminal domain-like"/>
    <property type="match status" value="1"/>
</dbReference>
<dbReference type="SUPFAM" id="SSF54826">
    <property type="entry name" value="Enolase N-terminal domain-like"/>
    <property type="match status" value="1"/>
</dbReference>
<dbReference type="PROSITE" id="PS00164">
    <property type="entry name" value="ENOLASE"/>
    <property type="match status" value="1"/>
</dbReference>